<gene>
    <name type="ordered locus">BPSL1241</name>
</gene>
<dbReference type="EMBL" id="BX571965">
    <property type="protein sequence ID" value="CAH35235.1"/>
    <property type="molecule type" value="Genomic_DNA"/>
</dbReference>
<dbReference type="RefSeq" id="YP_107862.1">
    <property type="nucleotide sequence ID" value="NC_006350.1"/>
</dbReference>
<dbReference type="SMR" id="Q63VK4"/>
<dbReference type="STRING" id="272560.BPSL1241"/>
<dbReference type="KEGG" id="bps:BPSL1241"/>
<dbReference type="PATRIC" id="fig|272560.51.peg.284"/>
<dbReference type="eggNOG" id="COG3022">
    <property type="taxonomic scope" value="Bacteria"/>
</dbReference>
<dbReference type="Proteomes" id="UP000000605">
    <property type="component" value="Chromosome 1"/>
</dbReference>
<dbReference type="GO" id="GO:0005829">
    <property type="term" value="C:cytosol"/>
    <property type="evidence" value="ECO:0007669"/>
    <property type="project" value="TreeGrafter"/>
</dbReference>
<dbReference type="GO" id="GO:0033194">
    <property type="term" value="P:response to hydroperoxide"/>
    <property type="evidence" value="ECO:0007669"/>
    <property type="project" value="TreeGrafter"/>
</dbReference>
<dbReference type="HAMAP" id="MF_00652">
    <property type="entry name" value="UPF0246"/>
    <property type="match status" value="1"/>
</dbReference>
<dbReference type="InterPro" id="IPR005583">
    <property type="entry name" value="YaaA"/>
</dbReference>
<dbReference type="NCBIfam" id="NF002541">
    <property type="entry name" value="PRK02101.1-1"/>
    <property type="match status" value="1"/>
</dbReference>
<dbReference type="NCBIfam" id="NF002542">
    <property type="entry name" value="PRK02101.1-3"/>
    <property type="match status" value="1"/>
</dbReference>
<dbReference type="PANTHER" id="PTHR30283:SF4">
    <property type="entry name" value="PEROXIDE STRESS RESISTANCE PROTEIN YAAA"/>
    <property type="match status" value="1"/>
</dbReference>
<dbReference type="PANTHER" id="PTHR30283">
    <property type="entry name" value="PEROXIDE STRESS RESPONSE PROTEIN YAAA"/>
    <property type="match status" value="1"/>
</dbReference>
<dbReference type="Pfam" id="PF03883">
    <property type="entry name" value="H2O2_YaaD"/>
    <property type="match status" value="1"/>
</dbReference>
<proteinExistence type="inferred from homology"/>
<organism>
    <name type="scientific">Burkholderia pseudomallei (strain K96243)</name>
    <dbReference type="NCBI Taxonomy" id="272560"/>
    <lineage>
        <taxon>Bacteria</taxon>
        <taxon>Pseudomonadati</taxon>
        <taxon>Pseudomonadota</taxon>
        <taxon>Betaproteobacteria</taxon>
        <taxon>Burkholderiales</taxon>
        <taxon>Burkholderiaceae</taxon>
        <taxon>Burkholderia</taxon>
        <taxon>pseudomallei group</taxon>
    </lineage>
</organism>
<name>Y1241_BURPS</name>
<reference key="1">
    <citation type="journal article" date="2004" name="Proc. Natl. Acad. Sci. U.S.A.">
        <title>Genomic plasticity of the causative agent of melioidosis, Burkholderia pseudomallei.</title>
        <authorList>
            <person name="Holden M.T.G."/>
            <person name="Titball R.W."/>
            <person name="Peacock S.J."/>
            <person name="Cerdeno-Tarraga A.-M."/>
            <person name="Atkins T."/>
            <person name="Crossman L.C."/>
            <person name="Pitt T."/>
            <person name="Churcher C."/>
            <person name="Mungall K.L."/>
            <person name="Bentley S.D."/>
            <person name="Sebaihia M."/>
            <person name="Thomson N.R."/>
            <person name="Bason N."/>
            <person name="Beacham I.R."/>
            <person name="Brooks K."/>
            <person name="Brown K.A."/>
            <person name="Brown N.F."/>
            <person name="Challis G.L."/>
            <person name="Cherevach I."/>
            <person name="Chillingworth T."/>
            <person name="Cronin A."/>
            <person name="Crossett B."/>
            <person name="Davis P."/>
            <person name="DeShazer D."/>
            <person name="Feltwell T."/>
            <person name="Fraser A."/>
            <person name="Hance Z."/>
            <person name="Hauser H."/>
            <person name="Holroyd S."/>
            <person name="Jagels K."/>
            <person name="Keith K.E."/>
            <person name="Maddison M."/>
            <person name="Moule S."/>
            <person name="Price C."/>
            <person name="Quail M.A."/>
            <person name="Rabbinowitsch E."/>
            <person name="Rutherford K."/>
            <person name="Sanders M."/>
            <person name="Simmonds M."/>
            <person name="Songsivilai S."/>
            <person name="Stevens K."/>
            <person name="Tumapa S."/>
            <person name="Vesaratchavest M."/>
            <person name="Whitehead S."/>
            <person name="Yeats C."/>
            <person name="Barrell B.G."/>
            <person name="Oyston P.C.F."/>
            <person name="Parkhill J."/>
        </authorList>
    </citation>
    <scope>NUCLEOTIDE SEQUENCE [LARGE SCALE GENOMIC DNA]</scope>
    <source>
        <strain>K96243</strain>
    </source>
</reference>
<evidence type="ECO:0000255" key="1">
    <source>
        <dbReference type="HAMAP-Rule" id="MF_00652"/>
    </source>
</evidence>
<protein>
    <recommendedName>
        <fullName evidence="1">UPF0246 protein BPSL1241</fullName>
    </recommendedName>
</protein>
<comment type="similarity">
    <text evidence="1">Belongs to the UPF0246 family.</text>
</comment>
<accession>Q63VK4</accession>
<feature type="chain" id="PRO_0000262001" description="UPF0246 protein BPSL1241">
    <location>
        <begin position="1"/>
        <end position="260"/>
    </location>
</feature>
<keyword id="KW-1185">Reference proteome</keyword>
<sequence>MIIVLSPAKSLDYETPPHVSHHTQPQFADDAAALIDELRRLSPQQIATLMSISDPLARLNFQRYADWSRASTPANAKQAVLAFNGDVYEGLDARSLSPDDLDYAQRHVRVLSGLYGLLRPLDLLQPYRLEMGTRFSNARGKDLYAFWGERITHALNAELKTRVGASRVLVNCASAEYFKSVKPKLLDARVVTPVFEDWKDGRYKIISFHAKRARGLMARYVVEGRIDSPDALKDFASEGYAFDASASNDDTYVFRRRAGA</sequence>